<dbReference type="EC" id="2.4.2.1" evidence="1"/>
<dbReference type="EC" id="2.4.2.2" evidence="1"/>
<dbReference type="EMBL" id="CP001614">
    <property type="protein sequence ID" value="ACR13883.1"/>
    <property type="molecule type" value="Genomic_DNA"/>
</dbReference>
<dbReference type="RefSeq" id="WP_015819998.1">
    <property type="nucleotide sequence ID" value="NC_012997.1"/>
</dbReference>
<dbReference type="SMR" id="C5BHX0"/>
<dbReference type="STRING" id="377629.TERTU_1859"/>
<dbReference type="KEGG" id="ttu:TERTU_1859"/>
<dbReference type="eggNOG" id="COG3123">
    <property type="taxonomic scope" value="Bacteria"/>
</dbReference>
<dbReference type="HOGENOM" id="CLU_157874_0_0_6"/>
<dbReference type="OrthoDB" id="9793848at2"/>
<dbReference type="Proteomes" id="UP000009080">
    <property type="component" value="Chromosome"/>
</dbReference>
<dbReference type="GO" id="GO:0005829">
    <property type="term" value="C:cytosol"/>
    <property type="evidence" value="ECO:0007669"/>
    <property type="project" value="TreeGrafter"/>
</dbReference>
<dbReference type="GO" id="GO:0047975">
    <property type="term" value="F:guanosine phosphorylase activity"/>
    <property type="evidence" value="ECO:0007669"/>
    <property type="project" value="UniProtKB-EC"/>
</dbReference>
<dbReference type="GO" id="GO:0004731">
    <property type="term" value="F:purine-nucleoside phosphorylase activity"/>
    <property type="evidence" value="ECO:0007669"/>
    <property type="project" value="UniProtKB-UniRule"/>
</dbReference>
<dbReference type="GO" id="GO:0009032">
    <property type="term" value="F:thymidine phosphorylase activity"/>
    <property type="evidence" value="ECO:0007669"/>
    <property type="project" value="UniProtKB-EC"/>
</dbReference>
<dbReference type="GO" id="GO:0004850">
    <property type="term" value="F:uridine phosphorylase activity"/>
    <property type="evidence" value="ECO:0007669"/>
    <property type="project" value="UniProtKB-EC"/>
</dbReference>
<dbReference type="CDD" id="cd20296">
    <property type="entry name" value="cupin_PpnP-like"/>
    <property type="match status" value="1"/>
</dbReference>
<dbReference type="FunFam" id="2.60.120.10:FF:000016">
    <property type="entry name" value="Pyrimidine/purine nucleoside phosphorylase"/>
    <property type="match status" value="1"/>
</dbReference>
<dbReference type="Gene3D" id="2.60.120.10">
    <property type="entry name" value="Jelly Rolls"/>
    <property type="match status" value="1"/>
</dbReference>
<dbReference type="HAMAP" id="MF_01537">
    <property type="entry name" value="Nucleos_phosphorylase_PpnP"/>
    <property type="match status" value="1"/>
</dbReference>
<dbReference type="InterPro" id="IPR009664">
    <property type="entry name" value="Ppnp"/>
</dbReference>
<dbReference type="InterPro" id="IPR014710">
    <property type="entry name" value="RmlC-like_jellyroll"/>
</dbReference>
<dbReference type="InterPro" id="IPR011051">
    <property type="entry name" value="RmlC_Cupin_sf"/>
</dbReference>
<dbReference type="PANTHER" id="PTHR36540">
    <property type="entry name" value="PYRIMIDINE/PURINE NUCLEOSIDE PHOSPHORYLASE"/>
    <property type="match status" value="1"/>
</dbReference>
<dbReference type="PANTHER" id="PTHR36540:SF1">
    <property type="entry name" value="PYRIMIDINE_PURINE NUCLEOSIDE PHOSPHORYLASE"/>
    <property type="match status" value="1"/>
</dbReference>
<dbReference type="Pfam" id="PF06865">
    <property type="entry name" value="Ppnp"/>
    <property type="match status" value="1"/>
</dbReference>
<dbReference type="SUPFAM" id="SSF51182">
    <property type="entry name" value="RmlC-like cupins"/>
    <property type="match status" value="1"/>
</dbReference>
<protein>
    <recommendedName>
        <fullName evidence="1">Pyrimidine/purine nucleoside phosphorylase</fullName>
        <ecNumber evidence="1">2.4.2.1</ecNumber>
        <ecNumber evidence="1">2.4.2.2</ecNumber>
    </recommendedName>
    <alternativeName>
        <fullName evidence="1">Adenosine phosphorylase</fullName>
    </alternativeName>
    <alternativeName>
        <fullName evidence="1">Cytidine phosphorylase</fullName>
    </alternativeName>
    <alternativeName>
        <fullName evidence="1">Guanosine phosphorylase</fullName>
    </alternativeName>
    <alternativeName>
        <fullName evidence="1">Inosine phosphorylase</fullName>
    </alternativeName>
    <alternativeName>
        <fullName evidence="1">Thymidine phosphorylase</fullName>
    </alternativeName>
    <alternativeName>
        <fullName evidence="1">Uridine phosphorylase</fullName>
    </alternativeName>
    <alternativeName>
        <fullName evidence="1">Xanthosine phosphorylase</fullName>
    </alternativeName>
</protein>
<feature type="chain" id="PRO_1000215417" description="Pyrimidine/purine nucleoside phosphorylase">
    <location>
        <begin position="1"/>
        <end position="94"/>
    </location>
</feature>
<sequence>MLTVNEYFEGKVKSIGFSPAGLPATIGVMAIGEYTFGTDCREIMTVVSGELTVKLPEQADWHTYIAGQTFEVEANQSFDLKVAVETAYLCQYDR</sequence>
<organism>
    <name type="scientific">Teredinibacter turnerae (strain ATCC 39867 / T7901)</name>
    <dbReference type="NCBI Taxonomy" id="377629"/>
    <lineage>
        <taxon>Bacteria</taxon>
        <taxon>Pseudomonadati</taxon>
        <taxon>Pseudomonadota</taxon>
        <taxon>Gammaproteobacteria</taxon>
        <taxon>Cellvibrionales</taxon>
        <taxon>Cellvibrionaceae</taxon>
        <taxon>Teredinibacter</taxon>
    </lineage>
</organism>
<name>PPNP_TERTT</name>
<proteinExistence type="inferred from homology"/>
<keyword id="KW-0328">Glycosyltransferase</keyword>
<keyword id="KW-1185">Reference proteome</keyword>
<keyword id="KW-0808">Transferase</keyword>
<evidence type="ECO:0000255" key="1">
    <source>
        <dbReference type="HAMAP-Rule" id="MF_01537"/>
    </source>
</evidence>
<reference key="1">
    <citation type="journal article" date="2009" name="PLoS ONE">
        <title>The complete genome of Teredinibacter turnerae T7901: an intracellular endosymbiont of marine wood-boring bivalves (shipworms).</title>
        <authorList>
            <person name="Yang J.C."/>
            <person name="Madupu R."/>
            <person name="Durkin A.S."/>
            <person name="Ekborg N.A."/>
            <person name="Pedamallu C.S."/>
            <person name="Hostetler J.B."/>
            <person name="Radune D."/>
            <person name="Toms B.S."/>
            <person name="Henrissat B."/>
            <person name="Coutinho P.M."/>
            <person name="Schwarz S."/>
            <person name="Field L."/>
            <person name="Trindade-Silva A.E."/>
            <person name="Soares C.A.G."/>
            <person name="Elshahawi S."/>
            <person name="Hanora A."/>
            <person name="Schmidt E.W."/>
            <person name="Haygood M.G."/>
            <person name="Posfai J."/>
            <person name="Benner J."/>
            <person name="Madinger C."/>
            <person name="Nove J."/>
            <person name="Anton B."/>
            <person name="Chaudhary K."/>
            <person name="Foster J."/>
            <person name="Holman A."/>
            <person name="Kumar S."/>
            <person name="Lessard P.A."/>
            <person name="Luyten Y.A."/>
            <person name="Slatko B."/>
            <person name="Wood N."/>
            <person name="Wu B."/>
            <person name="Teplitski M."/>
            <person name="Mougous J.D."/>
            <person name="Ward N."/>
            <person name="Eisen J.A."/>
            <person name="Badger J.H."/>
            <person name="Distel D.L."/>
        </authorList>
    </citation>
    <scope>NUCLEOTIDE SEQUENCE [LARGE SCALE GENOMIC DNA]</scope>
    <source>
        <strain>ATCC 39867 / T7901</strain>
    </source>
</reference>
<accession>C5BHX0</accession>
<comment type="function">
    <text evidence="1">Catalyzes the phosphorolysis of diverse nucleosides, yielding D-ribose 1-phosphate and the respective free bases. Can use uridine, adenosine, guanosine, cytidine, thymidine, inosine and xanthosine as substrates. Also catalyzes the reverse reactions.</text>
</comment>
<comment type="catalytic activity">
    <reaction evidence="1">
        <text>a purine D-ribonucleoside + phosphate = a purine nucleobase + alpha-D-ribose 1-phosphate</text>
        <dbReference type="Rhea" id="RHEA:19805"/>
        <dbReference type="ChEBI" id="CHEBI:26386"/>
        <dbReference type="ChEBI" id="CHEBI:43474"/>
        <dbReference type="ChEBI" id="CHEBI:57720"/>
        <dbReference type="ChEBI" id="CHEBI:142355"/>
        <dbReference type="EC" id="2.4.2.1"/>
    </reaction>
</comment>
<comment type="catalytic activity">
    <reaction evidence="1">
        <text>adenosine + phosphate = alpha-D-ribose 1-phosphate + adenine</text>
        <dbReference type="Rhea" id="RHEA:27642"/>
        <dbReference type="ChEBI" id="CHEBI:16335"/>
        <dbReference type="ChEBI" id="CHEBI:16708"/>
        <dbReference type="ChEBI" id="CHEBI:43474"/>
        <dbReference type="ChEBI" id="CHEBI:57720"/>
        <dbReference type="EC" id="2.4.2.1"/>
    </reaction>
</comment>
<comment type="catalytic activity">
    <reaction evidence="1">
        <text>cytidine + phosphate = cytosine + alpha-D-ribose 1-phosphate</text>
        <dbReference type="Rhea" id="RHEA:52540"/>
        <dbReference type="ChEBI" id="CHEBI:16040"/>
        <dbReference type="ChEBI" id="CHEBI:17562"/>
        <dbReference type="ChEBI" id="CHEBI:43474"/>
        <dbReference type="ChEBI" id="CHEBI:57720"/>
        <dbReference type="EC" id="2.4.2.2"/>
    </reaction>
</comment>
<comment type="catalytic activity">
    <reaction evidence="1">
        <text>guanosine + phosphate = alpha-D-ribose 1-phosphate + guanine</text>
        <dbReference type="Rhea" id="RHEA:13233"/>
        <dbReference type="ChEBI" id="CHEBI:16235"/>
        <dbReference type="ChEBI" id="CHEBI:16750"/>
        <dbReference type="ChEBI" id="CHEBI:43474"/>
        <dbReference type="ChEBI" id="CHEBI:57720"/>
        <dbReference type="EC" id="2.4.2.1"/>
    </reaction>
</comment>
<comment type="catalytic activity">
    <reaction evidence="1">
        <text>inosine + phosphate = alpha-D-ribose 1-phosphate + hypoxanthine</text>
        <dbReference type="Rhea" id="RHEA:27646"/>
        <dbReference type="ChEBI" id="CHEBI:17368"/>
        <dbReference type="ChEBI" id="CHEBI:17596"/>
        <dbReference type="ChEBI" id="CHEBI:43474"/>
        <dbReference type="ChEBI" id="CHEBI:57720"/>
        <dbReference type="EC" id="2.4.2.1"/>
    </reaction>
</comment>
<comment type="catalytic activity">
    <reaction evidence="1">
        <text>thymidine + phosphate = 2-deoxy-alpha-D-ribose 1-phosphate + thymine</text>
        <dbReference type="Rhea" id="RHEA:16037"/>
        <dbReference type="ChEBI" id="CHEBI:17748"/>
        <dbReference type="ChEBI" id="CHEBI:17821"/>
        <dbReference type="ChEBI" id="CHEBI:43474"/>
        <dbReference type="ChEBI" id="CHEBI:57259"/>
        <dbReference type="EC" id="2.4.2.2"/>
    </reaction>
</comment>
<comment type="catalytic activity">
    <reaction evidence="1">
        <text>uridine + phosphate = alpha-D-ribose 1-phosphate + uracil</text>
        <dbReference type="Rhea" id="RHEA:24388"/>
        <dbReference type="ChEBI" id="CHEBI:16704"/>
        <dbReference type="ChEBI" id="CHEBI:17568"/>
        <dbReference type="ChEBI" id="CHEBI:43474"/>
        <dbReference type="ChEBI" id="CHEBI:57720"/>
        <dbReference type="EC" id="2.4.2.2"/>
    </reaction>
</comment>
<comment type="catalytic activity">
    <reaction evidence="1">
        <text>xanthosine + phosphate = alpha-D-ribose 1-phosphate + xanthine</text>
        <dbReference type="Rhea" id="RHEA:27638"/>
        <dbReference type="ChEBI" id="CHEBI:17712"/>
        <dbReference type="ChEBI" id="CHEBI:18107"/>
        <dbReference type="ChEBI" id="CHEBI:43474"/>
        <dbReference type="ChEBI" id="CHEBI:57720"/>
        <dbReference type="EC" id="2.4.2.1"/>
    </reaction>
</comment>
<comment type="similarity">
    <text evidence="1">Belongs to the nucleoside phosphorylase PpnP family.</text>
</comment>
<gene>
    <name evidence="1" type="primary">ppnP</name>
    <name type="ordered locus">TERTU_1859</name>
</gene>